<comment type="function">
    <text evidence="2">Unidirectional NADP(+)-dependent cortisol dehydrogenase (in vitro).</text>
</comment>
<comment type="catalytic activity">
    <reaction evidence="2">
        <text>cortisone + NADPH + H(+) = cortisol + NADP(+)</text>
        <dbReference type="Rhea" id="RHEA:68616"/>
        <dbReference type="ChEBI" id="CHEBI:15378"/>
        <dbReference type="ChEBI" id="CHEBI:16962"/>
        <dbReference type="ChEBI" id="CHEBI:17650"/>
        <dbReference type="ChEBI" id="CHEBI:57783"/>
        <dbReference type="ChEBI" id="CHEBI:58349"/>
    </reaction>
    <physiologicalReaction direction="right-to-left" evidence="2">
        <dbReference type="Rhea" id="RHEA:68618"/>
    </physiologicalReaction>
</comment>
<comment type="subcellular location">
    <subcellularLocation>
        <location evidence="5">Secreted</location>
    </subcellularLocation>
</comment>
<comment type="similarity">
    <text evidence="5">Belongs to the short-chain dehydrogenases/reductases (SDR) family.</text>
</comment>
<comment type="caution">
    <text evidence="5">Present in human, non-human primate, sheep, pig and many other higher organisms, whereas an ortholog is absent in the genomes of mouse, rat and rabbit.</text>
</comment>
<keyword id="KW-0521">NADP</keyword>
<keyword id="KW-0560">Oxidoreductase</keyword>
<keyword id="KW-1185">Reference proteome</keyword>
<keyword id="KW-0964">Secreted</keyword>
<keyword id="KW-0732">Signal</keyword>
<accession>Q6P7J1</accession>
<protein>
    <recommendedName>
        <fullName>Hydroxysteroid 11-beta-dehydrogenase 1-like protein A</fullName>
        <ecNumber evidence="2">1.1.1.-</ecNumber>
    </recommendedName>
    <alternativeName>
        <fullName>11-beta-hydroxysteroid dehydrogenase type 3-A</fullName>
        <shortName>11-DH3-A</shortName>
        <shortName>11-beta-HSD3-A</shortName>
    </alternativeName>
</protein>
<gene>
    <name type="primary">hsd11b1l-a</name>
    <name type="synonym">hsd3-a</name>
</gene>
<organism>
    <name type="scientific">Xenopus laevis</name>
    <name type="common">African clawed frog</name>
    <dbReference type="NCBI Taxonomy" id="8355"/>
    <lineage>
        <taxon>Eukaryota</taxon>
        <taxon>Metazoa</taxon>
        <taxon>Chordata</taxon>
        <taxon>Craniata</taxon>
        <taxon>Vertebrata</taxon>
        <taxon>Euteleostomi</taxon>
        <taxon>Amphibia</taxon>
        <taxon>Batrachia</taxon>
        <taxon>Anura</taxon>
        <taxon>Pipoidea</taxon>
        <taxon>Pipidae</taxon>
        <taxon>Xenopodinae</taxon>
        <taxon>Xenopus</taxon>
        <taxon>Xenopus</taxon>
    </lineage>
</organism>
<evidence type="ECO:0000250" key="1"/>
<evidence type="ECO:0000250" key="2">
    <source>
        <dbReference type="UniProtKB" id="Q7Z5J1"/>
    </source>
</evidence>
<evidence type="ECO:0000255" key="3"/>
<evidence type="ECO:0000255" key="4">
    <source>
        <dbReference type="PROSITE-ProRule" id="PRU10001"/>
    </source>
</evidence>
<evidence type="ECO:0000305" key="5"/>
<sequence length="291" mass="31753">MAGVKLLLLSLCVGYTAYHFYSSESMNPESVRGKRVLITGSSTGIGEQIAYEFARMGAHIMVTARRLQRLQEVANECLKLGAASAHYVASDMGNLTSAQYVAQEAVNKLGGLDYLVLNHIGGSASFGFFKGEMDPVVGSIYINFLSYVQLTSAALKALQESQGSIVVMSSMSGRIGAPFTTSYCASKFALEGFYSSLRREFALQNSNMSVTVAVLGYIDTENAVKKVGNKVSMSASSKEDCAREVVKAAVLKQPELFYPYWGIKPFVLLRDWFPGLVAKILDNFYILENIQ</sequence>
<dbReference type="EC" id="1.1.1.-" evidence="2"/>
<dbReference type="EMBL" id="BC061652">
    <property type="protein sequence ID" value="AAH61652.1"/>
    <property type="molecule type" value="mRNA"/>
</dbReference>
<dbReference type="RefSeq" id="NP_001083596.1">
    <property type="nucleotide sequence ID" value="NM_001090127.1"/>
</dbReference>
<dbReference type="SMR" id="Q6P7J1"/>
<dbReference type="DNASU" id="399012"/>
<dbReference type="GeneID" id="399012"/>
<dbReference type="KEGG" id="xla:399012"/>
<dbReference type="AGR" id="Xenbase:XB-GENE-6254655"/>
<dbReference type="CTD" id="399012"/>
<dbReference type="Xenbase" id="XB-GENE-6254655">
    <property type="gene designation" value="hsd11b1l.2.S"/>
</dbReference>
<dbReference type="OrthoDB" id="1933717at2759"/>
<dbReference type="Proteomes" id="UP000186698">
    <property type="component" value="Chromosome 1S"/>
</dbReference>
<dbReference type="Bgee" id="399012">
    <property type="expression patterns" value="Expressed in liver and 7 other cell types or tissues"/>
</dbReference>
<dbReference type="GO" id="GO:0005576">
    <property type="term" value="C:extracellular region"/>
    <property type="evidence" value="ECO:0007669"/>
    <property type="project" value="UniProtKB-SubCell"/>
</dbReference>
<dbReference type="GO" id="GO:0043231">
    <property type="term" value="C:intracellular membrane-bounded organelle"/>
    <property type="evidence" value="ECO:0000318"/>
    <property type="project" value="GO_Central"/>
</dbReference>
<dbReference type="GO" id="GO:0016491">
    <property type="term" value="F:oxidoreductase activity"/>
    <property type="evidence" value="ECO:0000318"/>
    <property type="project" value="GO_Central"/>
</dbReference>
<dbReference type="CDD" id="cd05332">
    <property type="entry name" value="11beta-HSD1_like_SDR_c"/>
    <property type="match status" value="1"/>
</dbReference>
<dbReference type="Gene3D" id="3.40.50.720">
    <property type="entry name" value="NAD(P)-binding Rossmann-like Domain"/>
    <property type="match status" value="1"/>
</dbReference>
<dbReference type="InterPro" id="IPR051253">
    <property type="entry name" value="11-beta-HSD"/>
</dbReference>
<dbReference type="InterPro" id="IPR036291">
    <property type="entry name" value="NAD(P)-bd_dom_sf"/>
</dbReference>
<dbReference type="InterPro" id="IPR020904">
    <property type="entry name" value="Sc_DH/Rdtase_CS"/>
</dbReference>
<dbReference type="InterPro" id="IPR002347">
    <property type="entry name" value="SDR_fam"/>
</dbReference>
<dbReference type="PANTHER" id="PTHR44279">
    <property type="entry name" value="HYDROXYSTEROID (11-BETA) DEHYDROGENASE 1-LIKE B-RELATED"/>
    <property type="match status" value="1"/>
</dbReference>
<dbReference type="PANTHER" id="PTHR44279:SF5">
    <property type="entry name" value="HYDROXYSTEROID 11-BETA-DEHYDROGENASE 1-LIKE PROTEIN B"/>
    <property type="match status" value="1"/>
</dbReference>
<dbReference type="Pfam" id="PF00106">
    <property type="entry name" value="adh_short"/>
    <property type="match status" value="1"/>
</dbReference>
<dbReference type="PRINTS" id="PR00081">
    <property type="entry name" value="GDHRDH"/>
</dbReference>
<dbReference type="SUPFAM" id="SSF51735">
    <property type="entry name" value="NAD(P)-binding Rossmann-fold domains"/>
    <property type="match status" value="1"/>
</dbReference>
<dbReference type="PROSITE" id="PS00061">
    <property type="entry name" value="ADH_SHORT"/>
    <property type="match status" value="1"/>
</dbReference>
<reference key="1">
    <citation type="submission" date="2003-11" db="EMBL/GenBank/DDBJ databases">
        <authorList>
            <consortium name="NIH - Xenopus Gene Collection (XGC) project"/>
        </authorList>
    </citation>
    <scope>NUCLEOTIDE SEQUENCE [LARGE SCALE MRNA]</scope>
    <source>
        <tissue>Kidney</tissue>
    </source>
</reference>
<feature type="signal peptide" evidence="3">
    <location>
        <begin position="1"/>
        <end position="18"/>
    </location>
</feature>
<feature type="chain" id="PRO_0000316820" description="Hydroxysteroid 11-beta-dehydrogenase 1-like protein A">
    <location>
        <begin position="19"/>
        <end position="291"/>
    </location>
</feature>
<feature type="active site" description="Proton acceptor" evidence="4">
    <location>
        <position position="183"/>
    </location>
</feature>
<feature type="binding site" evidence="1">
    <location>
        <begin position="40"/>
        <end position="66"/>
    </location>
    <ligand>
        <name>NADP(+)</name>
        <dbReference type="ChEBI" id="CHEBI:58349"/>
    </ligand>
</feature>
<feature type="binding site" evidence="1">
    <location>
        <begin position="91"/>
        <end position="92"/>
    </location>
    <ligand>
        <name>NADP(+)</name>
        <dbReference type="ChEBI" id="CHEBI:58349"/>
    </ligand>
</feature>
<feature type="binding site" evidence="1">
    <location>
        <begin position="118"/>
        <end position="120"/>
    </location>
    <ligand>
        <name>NADP(+)</name>
        <dbReference type="ChEBI" id="CHEBI:58349"/>
    </ligand>
</feature>
<feature type="binding site" evidence="1">
    <location>
        <position position="170"/>
    </location>
    <ligand>
        <name>substrate</name>
    </ligand>
</feature>
<feature type="binding site" evidence="1">
    <location>
        <begin position="183"/>
        <end position="187"/>
    </location>
    <ligand>
        <name>NADP(+)</name>
        <dbReference type="ChEBI" id="CHEBI:58349"/>
    </ligand>
</feature>
<feature type="binding site" evidence="1">
    <location>
        <begin position="216"/>
        <end position="222"/>
    </location>
    <ligand>
        <name>NADP(+)</name>
        <dbReference type="ChEBI" id="CHEBI:58349"/>
    </ligand>
</feature>
<proteinExistence type="evidence at transcript level"/>
<name>DHI1A_XENLA</name>